<reference key="1">
    <citation type="journal article" date="2001" name="Science">
        <title>Comparative genomics of Listeria species.</title>
        <authorList>
            <person name="Glaser P."/>
            <person name="Frangeul L."/>
            <person name="Buchrieser C."/>
            <person name="Rusniok C."/>
            <person name="Amend A."/>
            <person name="Baquero F."/>
            <person name="Berche P."/>
            <person name="Bloecker H."/>
            <person name="Brandt P."/>
            <person name="Chakraborty T."/>
            <person name="Charbit A."/>
            <person name="Chetouani F."/>
            <person name="Couve E."/>
            <person name="de Daruvar A."/>
            <person name="Dehoux P."/>
            <person name="Domann E."/>
            <person name="Dominguez-Bernal G."/>
            <person name="Duchaud E."/>
            <person name="Durant L."/>
            <person name="Dussurget O."/>
            <person name="Entian K.-D."/>
            <person name="Fsihi H."/>
            <person name="Garcia-del Portillo F."/>
            <person name="Garrido P."/>
            <person name="Gautier L."/>
            <person name="Goebel W."/>
            <person name="Gomez-Lopez N."/>
            <person name="Hain T."/>
            <person name="Hauf J."/>
            <person name="Jackson D."/>
            <person name="Jones L.-M."/>
            <person name="Kaerst U."/>
            <person name="Kreft J."/>
            <person name="Kuhn M."/>
            <person name="Kunst F."/>
            <person name="Kurapkat G."/>
            <person name="Madueno E."/>
            <person name="Maitournam A."/>
            <person name="Mata Vicente J."/>
            <person name="Ng E."/>
            <person name="Nedjari H."/>
            <person name="Nordsiek G."/>
            <person name="Novella S."/>
            <person name="de Pablos B."/>
            <person name="Perez-Diaz J.-C."/>
            <person name="Purcell R."/>
            <person name="Remmel B."/>
            <person name="Rose M."/>
            <person name="Schlueter T."/>
            <person name="Simoes N."/>
            <person name="Tierrez A."/>
            <person name="Vazquez-Boland J.-A."/>
            <person name="Voss H."/>
            <person name="Wehland J."/>
            <person name="Cossart P."/>
        </authorList>
    </citation>
    <scope>NUCLEOTIDE SEQUENCE [LARGE SCALE GENOMIC DNA]</scope>
    <source>
        <strain>ATCC BAA-680 / CLIP 11262</strain>
    </source>
</reference>
<sequence>MNQIEKTGELTSSRFTVRDFTELVKIGIVNSNTITAFTGMWLAFQLNGISFIQNVDVIFFTIVGSALIVAASGAFNNVIDRDIDGIMERTKNRPTMTGKISGKRALMVALVLGVVGTIMLFMTTWQAGVLGVIGVFLYVVVYSLYAKRKLVSNTVIGSFSGAVPPLIGWFAVEPSFSIVPIMLFLVMFCWQPPHFYAIAIKRKEEYAAAGIPMLPVVKGIERTKKSMFFWVILLTVLPFFMFDLGLVYVILATLLNIGWLALSIYGFKMDDSIKWAKWMFVYSLNYMTILFVAMVVISIFL</sequence>
<comment type="function">
    <text evidence="1">Converts heme B (protoheme IX) to heme O by substitution of the vinyl group on carbon 2 of heme B porphyrin ring with a hydroxyethyl farnesyl side group.</text>
</comment>
<comment type="catalytic activity">
    <reaction evidence="1">
        <text>heme b + (2E,6E)-farnesyl diphosphate + H2O = Fe(II)-heme o + diphosphate</text>
        <dbReference type="Rhea" id="RHEA:28070"/>
        <dbReference type="ChEBI" id="CHEBI:15377"/>
        <dbReference type="ChEBI" id="CHEBI:33019"/>
        <dbReference type="ChEBI" id="CHEBI:60344"/>
        <dbReference type="ChEBI" id="CHEBI:60530"/>
        <dbReference type="ChEBI" id="CHEBI:175763"/>
        <dbReference type="EC" id="2.5.1.141"/>
    </reaction>
</comment>
<comment type="pathway">
    <text evidence="1">Porphyrin-containing compound metabolism; heme O biosynthesis; heme O from protoheme: step 1/1.</text>
</comment>
<comment type="subunit">
    <text evidence="1">Interacts with CtaA.</text>
</comment>
<comment type="subcellular location">
    <subcellularLocation>
        <location evidence="1">Cell membrane</location>
        <topology evidence="1">Multi-pass membrane protein</topology>
    </subcellularLocation>
</comment>
<comment type="miscellaneous">
    <text evidence="1">Carbon 2 of the heme B porphyrin ring is defined according to the Fischer nomenclature.</text>
</comment>
<comment type="similarity">
    <text evidence="1">Belongs to the UbiA prenyltransferase family. Protoheme IX farnesyltransferase subfamily.</text>
</comment>
<name>COXX_LISIN</name>
<dbReference type="EC" id="2.5.1.141" evidence="1"/>
<dbReference type="EMBL" id="AL596171">
    <property type="protein sequence ID" value="CAC97393.1"/>
    <property type="molecule type" value="Genomic_DNA"/>
</dbReference>
<dbReference type="PIR" id="AI1702">
    <property type="entry name" value="AI1702"/>
</dbReference>
<dbReference type="SMR" id="Q929W0"/>
<dbReference type="STRING" id="272626.gene:17566521"/>
<dbReference type="KEGG" id="lin:ctaB"/>
<dbReference type="eggNOG" id="COG0109">
    <property type="taxonomic scope" value="Bacteria"/>
</dbReference>
<dbReference type="HOGENOM" id="CLU_029631_0_0_9"/>
<dbReference type="OrthoDB" id="9814417at2"/>
<dbReference type="UniPathway" id="UPA00834">
    <property type="reaction ID" value="UER00712"/>
</dbReference>
<dbReference type="Proteomes" id="UP000002513">
    <property type="component" value="Chromosome"/>
</dbReference>
<dbReference type="GO" id="GO:0005886">
    <property type="term" value="C:plasma membrane"/>
    <property type="evidence" value="ECO:0007669"/>
    <property type="project" value="UniProtKB-SubCell"/>
</dbReference>
<dbReference type="GO" id="GO:0008495">
    <property type="term" value="F:protoheme IX farnesyltransferase activity"/>
    <property type="evidence" value="ECO:0007669"/>
    <property type="project" value="UniProtKB-UniRule"/>
</dbReference>
<dbReference type="GO" id="GO:0048034">
    <property type="term" value="P:heme O biosynthetic process"/>
    <property type="evidence" value="ECO:0007669"/>
    <property type="project" value="UniProtKB-UniRule"/>
</dbReference>
<dbReference type="CDD" id="cd13957">
    <property type="entry name" value="PT_UbiA_Cox10"/>
    <property type="match status" value="1"/>
</dbReference>
<dbReference type="FunFam" id="1.10.357.140:FF:000001">
    <property type="entry name" value="Protoheme IX farnesyltransferase"/>
    <property type="match status" value="1"/>
</dbReference>
<dbReference type="Gene3D" id="1.10.357.140">
    <property type="entry name" value="UbiA prenyltransferase"/>
    <property type="match status" value="1"/>
</dbReference>
<dbReference type="HAMAP" id="MF_00154">
    <property type="entry name" value="CyoE_CtaB"/>
    <property type="match status" value="1"/>
</dbReference>
<dbReference type="InterPro" id="IPR006369">
    <property type="entry name" value="Protohaem_IX_farnesylTrfase"/>
</dbReference>
<dbReference type="InterPro" id="IPR000537">
    <property type="entry name" value="UbiA_prenyltransferase"/>
</dbReference>
<dbReference type="InterPro" id="IPR030470">
    <property type="entry name" value="UbiA_prenylTrfase_CS"/>
</dbReference>
<dbReference type="InterPro" id="IPR044878">
    <property type="entry name" value="UbiA_sf"/>
</dbReference>
<dbReference type="NCBIfam" id="TIGR01473">
    <property type="entry name" value="cyoE_ctaB"/>
    <property type="match status" value="1"/>
</dbReference>
<dbReference type="PANTHER" id="PTHR43448">
    <property type="entry name" value="PROTOHEME IX FARNESYLTRANSFERASE, MITOCHONDRIAL"/>
    <property type="match status" value="1"/>
</dbReference>
<dbReference type="PANTHER" id="PTHR43448:SF2">
    <property type="entry name" value="PROTOHEME IX FARNESYLTRANSFERASE, MITOCHONDRIAL"/>
    <property type="match status" value="1"/>
</dbReference>
<dbReference type="Pfam" id="PF01040">
    <property type="entry name" value="UbiA"/>
    <property type="match status" value="1"/>
</dbReference>
<dbReference type="PROSITE" id="PS00943">
    <property type="entry name" value="UBIA"/>
    <property type="match status" value="1"/>
</dbReference>
<gene>
    <name evidence="1" type="primary">ctaB</name>
    <name type="ordered locus">lin2163</name>
</gene>
<protein>
    <recommendedName>
        <fullName evidence="1">Protoheme IX farnesyltransferase</fullName>
        <ecNumber evidence="1">2.5.1.141</ecNumber>
    </recommendedName>
    <alternativeName>
        <fullName evidence="1">Heme B farnesyltransferase</fullName>
    </alternativeName>
    <alternativeName>
        <fullName evidence="1">Heme O synthase</fullName>
    </alternativeName>
</protein>
<accession>Q929W0</accession>
<organism>
    <name type="scientific">Listeria innocua serovar 6a (strain ATCC BAA-680 / CLIP 11262)</name>
    <dbReference type="NCBI Taxonomy" id="272626"/>
    <lineage>
        <taxon>Bacteria</taxon>
        <taxon>Bacillati</taxon>
        <taxon>Bacillota</taxon>
        <taxon>Bacilli</taxon>
        <taxon>Bacillales</taxon>
        <taxon>Listeriaceae</taxon>
        <taxon>Listeria</taxon>
    </lineage>
</organism>
<keyword id="KW-1003">Cell membrane</keyword>
<keyword id="KW-0350">Heme biosynthesis</keyword>
<keyword id="KW-0472">Membrane</keyword>
<keyword id="KW-0808">Transferase</keyword>
<keyword id="KW-0812">Transmembrane</keyword>
<keyword id="KW-1133">Transmembrane helix</keyword>
<proteinExistence type="inferred from homology"/>
<feature type="chain" id="PRO_0000327071" description="Protoheme IX farnesyltransferase">
    <location>
        <begin position="1"/>
        <end position="301"/>
    </location>
</feature>
<feature type="transmembrane region" description="Helical" evidence="1">
    <location>
        <begin position="20"/>
        <end position="42"/>
    </location>
</feature>
<feature type="transmembrane region" description="Helical" evidence="1">
    <location>
        <begin position="55"/>
        <end position="75"/>
    </location>
</feature>
<feature type="transmembrane region" description="Helical" evidence="1">
    <location>
        <begin position="105"/>
        <end position="125"/>
    </location>
</feature>
<feature type="transmembrane region" description="Helical" evidence="1">
    <location>
        <begin position="126"/>
        <end position="146"/>
    </location>
</feature>
<feature type="transmembrane region" description="Helical" evidence="1">
    <location>
        <begin position="150"/>
        <end position="172"/>
    </location>
</feature>
<feature type="transmembrane region" description="Helical" evidence="1">
    <location>
        <begin position="176"/>
        <end position="198"/>
    </location>
</feature>
<feature type="transmembrane region" description="Helical" evidence="1">
    <location>
        <begin position="227"/>
        <end position="247"/>
    </location>
</feature>
<feature type="transmembrane region" description="Helical" evidence="1">
    <location>
        <begin position="249"/>
        <end position="269"/>
    </location>
</feature>
<feature type="transmembrane region" description="Helical" evidence="1">
    <location>
        <begin position="280"/>
        <end position="300"/>
    </location>
</feature>
<evidence type="ECO:0000255" key="1">
    <source>
        <dbReference type="HAMAP-Rule" id="MF_00154"/>
    </source>
</evidence>